<keyword id="KW-0058">Aromatic hydrocarbons catabolism</keyword>
<keyword id="KW-0520">NAD</keyword>
<keyword id="KW-0560">Oxidoreductase</keyword>
<keyword id="KW-1185">Reference proteome</keyword>
<comment type="function">
    <text evidence="1">Involved in cholesterol degradation. Catalyzes the conversion of propanal to propanoyl-CoA, using NAD(+) and coenzyme A.</text>
</comment>
<comment type="catalytic activity">
    <reaction evidence="1">
        <text>propanal + NAD(+) + CoA = propanoyl-CoA + NADH + H(+)</text>
        <dbReference type="Rhea" id="RHEA:36027"/>
        <dbReference type="ChEBI" id="CHEBI:15378"/>
        <dbReference type="ChEBI" id="CHEBI:17153"/>
        <dbReference type="ChEBI" id="CHEBI:57287"/>
        <dbReference type="ChEBI" id="CHEBI:57392"/>
        <dbReference type="ChEBI" id="CHEBI:57540"/>
        <dbReference type="ChEBI" id="CHEBI:57945"/>
        <dbReference type="EC" id="1.2.1.87"/>
    </reaction>
    <physiologicalReaction direction="left-to-right" evidence="1">
        <dbReference type="Rhea" id="RHEA:36028"/>
    </physiologicalReaction>
</comment>
<comment type="catalytic activity">
    <reaction evidence="1 2">
        <text>acetaldehyde + NAD(+) + CoA = acetyl-CoA + NADH + H(+)</text>
        <dbReference type="Rhea" id="RHEA:23288"/>
        <dbReference type="ChEBI" id="CHEBI:15343"/>
        <dbReference type="ChEBI" id="CHEBI:15378"/>
        <dbReference type="ChEBI" id="CHEBI:57287"/>
        <dbReference type="ChEBI" id="CHEBI:57288"/>
        <dbReference type="ChEBI" id="CHEBI:57540"/>
        <dbReference type="ChEBI" id="CHEBI:57945"/>
        <dbReference type="EC" id="1.2.1.10"/>
    </reaction>
    <physiologicalReaction direction="left-to-right" evidence="1">
        <dbReference type="Rhea" id="RHEA:23289"/>
    </physiologicalReaction>
</comment>
<comment type="subunit">
    <text evidence="1">Monomer. Forms a heterotetramer composed of two aldolase (HsaF) and two dehydrogenase (HsaG) subunits.</text>
</comment>
<comment type="similarity">
    <text evidence="2">Belongs to the acetaldehyde dehydrogenase family.</text>
</comment>
<accession>A5U8K9</accession>
<dbReference type="EC" id="1.2.1.87" evidence="1"/>
<dbReference type="EC" id="1.2.1.10" evidence="2"/>
<dbReference type="EMBL" id="CP000611">
    <property type="protein sequence ID" value="ABQ75359.1"/>
    <property type="molecule type" value="Genomic_DNA"/>
</dbReference>
<dbReference type="RefSeq" id="WP_003419251.1">
    <property type="nucleotide sequence ID" value="NZ_CP016972.1"/>
</dbReference>
<dbReference type="SMR" id="A5U8K9"/>
<dbReference type="KEGG" id="mra:MRA_3574"/>
<dbReference type="eggNOG" id="COG4569">
    <property type="taxonomic scope" value="Bacteria"/>
</dbReference>
<dbReference type="HOGENOM" id="CLU_062208_0_0_11"/>
<dbReference type="Proteomes" id="UP000001988">
    <property type="component" value="Chromosome"/>
</dbReference>
<dbReference type="GO" id="GO:0008774">
    <property type="term" value="F:acetaldehyde dehydrogenase (acetylating) activity"/>
    <property type="evidence" value="ECO:0007669"/>
    <property type="project" value="UniProtKB-UniRule"/>
</dbReference>
<dbReference type="GO" id="GO:0051287">
    <property type="term" value="F:NAD binding"/>
    <property type="evidence" value="ECO:0007669"/>
    <property type="project" value="UniProtKB-UniRule"/>
</dbReference>
<dbReference type="GO" id="GO:0009056">
    <property type="term" value="P:catabolic process"/>
    <property type="evidence" value="ECO:0007669"/>
    <property type="project" value="UniProtKB-KW"/>
</dbReference>
<dbReference type="CDD" id="cd23933">
    <property type="entry name" value="ALDH_C"/>
    <property type="match status" value="1"/>
</dbReference>
<dbReference type="Gene3D" id="3.30.360.10">
    <property type="entry name" value="Dihydrodipicolinate Reductase, domain 2"/>
    <property type="match status" value="1"/>
</dbReference>
<dbReference type="Gene3D" id="3.40.50.720">
    <property type="entry name" value="NAD(P)-binding Rossmann-like Domain"/>
    <property type="match status" value="1"/>
</dbReference>
<dbReference type="HAMAP" id="MF_01657">
    <property type="entry name" value="Ac_ald_DH_ac"/>
    <property type="match status" value="1"/>
</dbReference>
<dbReference type="InterPro" id="IPR003361">
    <property type="entry name" value="Acetaldehyde_dehydrogenase"/>
</dbReference>
<dbReference type="InterPro" id="IPR015426">
    <property type="entry name" value="Acetylaldehyde_DH_C"/>
</dbReference>
<dbReference type="InterPro" id="IPR036291">
    <property type="entry name" value="NAD(P)-bd_dom_sf"/>
</dbReference>
<dbReference type="InterPro" id="IPR000534">
    <property type="entry name" value="Semialdehyde_DH_NAD-bd"/>
</dbReference>
<dbReference type="NCBIfam" id="TIGR03215">
    <property type="entry name" value="ac_ald_DH_ac"/>
    <property type="match status" value="1"/>
</dbReference>
<dbReference type="NCBIfam" id="NF006157">
    <property type="entry name" value="PRK08300.1"/>
    <property type="match status" value="1"/>
</dbReference>
<dbReference type="Pfam" id="PF09290">
    <property type="entry name" value="AcetDehyd-dimer"/>
    <property type="match status" value="1"/>
</dbReference>
<dbReference type="Pfam" id="PF01118">
    <property type="entry name" value="Semialdhyde_dh"/>
    <property type="match status" value="1"/>
</dbReference>
<dbReference type="PIRSF" id="PIRSF015689">
    <property type="entry name" value="Actaldh_dh_actl"/>
    <property type="match status" value="1"/>
</dbReference>
<dbReference type="SMART" id="SM00859">
    <property type="entry name" value="Semialdhyde_dh"/>
    <property type="match status" value="1"/>
</dbReference>
<dbReference type="SUPFAM" id="SSF55347">
    <property type="entry name" value="Glyceraldehyde-3-phosphate dehydrogenase-like, C-terminal domain"/>
    <property type="match status" value="1"/>
</dbReference>
<dbReference type="SUPFAM" id="SSF51735">
    <property type="entry name" value="NAD(P)-binding Rossmann-fold domains"/>
    <property type="match status" value="1"/>
</dbReference>
<name>ACDH_MYCTA</name>
<reference key="1">
    <citation type="journal article" date="2008" name="PLoS ONE">
        <title>Genetic basis of virulence attenuation revealed by comparative genomic analysis of Mycobacterium tuberculosis strain H37Ra versus H37Rv.</title>
        <authorList>
            <person name="Zheng H."/>
            <person name="Lu L."/>
            <person name="Wang B."/>
            <person name="Pu S."/>
            <person name="Zhang X."/>
            <person name="Zhu G."/>
            <person name="Shi W."/>
            <person name="Zhang L."/>
            <person name="Wang H."/>
            <person name="Wang S."/>
            <person name="Zhao G."/>
            <person name="Zhang Y."/>
        </authorList>
    </citation>
    <scope>NUCLEOTIDE SEQUENCE [LARGE SCALE GENOMIC DNA]</scope>
    <source>
        <strain>ATCC 25177 / H37Ra</strain>
    </source>
</reference>
<sequence length="303" mass="32009">MPSKAKVAIVGSGNISTDLLYKLLRSEWLEPRWMVGIDPESDGLARAAKLGLETTHEGVDWLLAQPDKPDLVFEATSAYVHRDAAPKYAEAGIRAIDLTPAAVGPAVIPPANLREHLDAPNVNMITCGGQATIPIVYAVSRIVEVPYAEIVASVASVSAGPGTRANIDEFTKTTARGVQTIGGAARGKAIIILNPADPPMIMRDTIFCAIPTDADREAIAASIHDVVKEVQTYVPGYRLLNEPQFDEPSINSGGQALVTTFVEVEGAGDYLPPYAGNLDIMTAAATKVGEEIAKETLVVGGAR</sequence>
<organism>
    <name type="scientific">Mycobacterium tuberculosis (strain ATCC 25177 / H37Ra)</name>
    <dbReference type="NCBI Taxonomy" id="419947"/>
    <lineage>
        <taxon>Bacteria</taxon>
        <taxon>Bacillati</taxon>
        <taxon>Actinomycetota</taxon>
        <taxon>Actinomycetes</taxon>
        <taxon>Mycobacteriales</taxon>
        <taxon>Mycobacteriaceae</taxon>
        <taxon>Mycobacterium</taxon>
        <taxon>Mycobacterium tuberculosis complex</taxon>
    </lineage>
</organism>
<feature type="chain" id="PRO_0000387689" description="Propanal dehydrogenase (CoA-propanoylating)">
    <location>
        <begin position="1"/>
        <end position="303"/>
    </location>
</feature>
<feature type="active site" description="Acyl-thioester intermediate" evidence="2">
    <location>
        <position position="127"/>
    </location>
</feature>
<feature type="binding site" evidence="2">
    <location>
        <begin position="12"/>
        <end position="15"/>
    </location>
    <ligand>
        <name>NAD(+)</name>
        <dbReference type="ChEBI" id="CHEBI:57540"/>
    </ligand>
</feature>
<feature type="binding site" evidence="2">
    <location>
        <begin position="158"/>
        <end position="166"/>
    </location>
    <ligand>
        <name>NAD(+)</name>
        <dbReference type="ChEBI" id="CHEBI:57540"/>
    </ligand>
</feature>
<feature type="binding site" evidence="2">
    <location>
        <position position="277"/>
    </location>
    <ligand>
        <name>NAD(+)</name>
        <dbReference type="ChEBI" id="CHEBI:57540"/>
    </ligand>
</feature>
<proteinExistence type="inferred from homology"/>
<protein>
    <recommendedName>
        <fullName evidence="1">Propanal dehydrogenase (CoA-propanoylating)</fullName>
        <ecNumber evidence="1">1.2.1.87</ecNumber>
    </recommendedName>
    <alternativeName>
        <fullName evidence="2">Acetaldehyde dehydrogenase</fullName>
        <ecNumber evidence="2">1.2.1.10</ecNumber>
    </alternativeName>
    <alternativeName>
        <fullName evidence="2">Acetaldehyde dehydrogenase [acetylating]</fullName>
    </alternativeName>
</protein>
<gene>
    <name evidence="1" type="primary">hsaG</name>
    <name evidence="3" type="synonym">mhpF</name>
    <name type="ordered locus">MRA_3574</name>
</gene>
<evidence type="ECO:0000250" key="1">
    <source>
        <dbReference type="UniProtKB" id="P9WQH3"/>
    </source>
</evidence>
<evidence type="ECO:0000255" key="2">
    <source>
        <dbReference type="HAMAP-Rule" id="MF_01657"/>
    </source>
</evidence>
<evidence type="ECO:0000312" key="3">
    <source>
        <dbReference type="EMBL" id="ABQ75359.1"/>
    </source>
</evidence>